<accession>Q54SD7</accession>
<reference key="1">
    <citation type="journal article" date="2005" name="Nature">
        <title>The genome of the social amoeba Dictyostelium discoideum.</title>
        <authorList>
            <person name="Eichinger L."/>
            <person name="Pachebat J.A."/>
            <person name="Gloeckner G."/>
            <person name="Rajandream M.A."/>
            <person name="Sucgang R."/>
            <person name="Berriman M."/>
            <person name="Song J."/>
            <person name="Olsen R."/>
            <person name="Szafranski K."/>
            <person name="Xu Q."/>
            <person name="Tunggal B."/>
            <person name="Kummerfeld S."/>
            <person name="Madera M."/>
            <person name="Konfortov B.A."/>
            <person name="Rivero F."/>
            <person name="Bankier A.T."/>
            <person name="Lehmann R."/>
            <person name="Hamlin N."/>
            <person name="Davies R."/>
            <person name="Gaudet P."/>
            <person name="Fey P."/>
            <person name="Pilcher K."/>
            <person name="Chen G."/>
            <person name="Saunders D."/>
            <person name="Sodergren E.J."/>
            <person name="Davis P."/>
            <person name="Kerhornou A."/>
            <person name="Nie X."/>
            <person name="Hall N."/>
            <person name="Anjard C."/>
            <person name="Hemphill L."/>
            <person name="Bason N."/>
            <person name="Farbrother P."/>
            <person name="Desany B."/>
            <person name="Just E."/>
            <person name="Morio T."/>
            <person name="Rost R."/>
            <person name="Churcher C.M."/>
            <person name="Cooper J."/>
            <person name="Haydock S."/>
            <person name="van Driessche N."/>
            <person name="Cronin A."/>
            <person name="Goodhead I."/>
            <person name="Muzny D.M."/>
            <person name="Mourier T."/>
            <person name="Pain A."/>
            <person name="Lu M."/>
            <person name="Harper D."/>
            <person name="Lindsay R."/>
            <person name="Hauser H."/>
            <person name="James K.D."/>
            <person name="Quiles M."/>
            <person name="Madan Babu M."/>
            <person name="Saito T."/>
            <person name="Buchrieser C."/>
            <person name="Wardroper A."/>
            <person name="Felder M."/>
            <person name="Thangavelu M."/>
            <person name="Johnson D."/>
            <person name="Knights A."/>
            <person name="Loulseged H."/>
            <person name="Mungall K.L."/>
            <person name="Oliver K."/>
            <person name="Price C."/>
            <person name="Quail M.A."/>
            <person name="Urushihara H."/>
            <person name="Hernandez J."/>
            <person name="Rabbinowitsch E."/>
            <person name="Steffen D."/>
            <person name="Sanders M."/>
            <person name="Ma J."/>
            <person name="Kohara Y."/>
            <person name="Sharp S."/>
            <person name="Simmonds M.N."/>
            <person name="Spiegler S."/>
            <person name="Tivey A."/>
            <person name="Sugano S."/>
            <person name="White B."/>
            <person name="Walker D."/>
            <person name="Woodward J.R."/>
            <person name="Winckler T."/>
            <person name="Tanaka Y."/>
            <person name="Shaulsky G."/>
            <person name="Schleicher M."/>
            <person name="Weinstock G.M."/>
            <person name="Rosenthal A."/>
            <person name="Cox E.C."/>
            <person name="Chisholm R.L."/>
            <person name="Gibbs R.A."/>
            <person name="Loomis W.F."/>
            <person name="Platzer M."/>
            <person name="Kay R.R."/>
            <person name="Williams J.G."/>
            <person name="Dear P.H."/>
            <person name="Noegel A.A."/>
            <person name="Barrell B.G."/>
            <person name="Kuspa A."/>
        </authorList>
    </citation>
    <scope>NUCLEOTIDE SEQUENCE [LARGE SCALE GENOMIC DNA]</scope>
    <source>
        <strain>AX4</strain>
    </source>
</reference>
<dbReference type="EMBL" id="AAFI02000047">
    <property type="protein sequence ID" value="EAL66121.1"/>
    <property type="molecule type" value="Genomic_DNA"/>
</dbReference>
<dbReference type="RefSeq" id="XP_640102.1">
    <property type="nucleotide sequence ID" value="XM_635010.1"/>
</dbReference>
<dbReference type="PaxDb" id="44689-DDB0204813"/>
<dbReference type="EnsemblProtists" id="EAL66121">
    <property type="protein sequence ID" value="EAL66121"/>
    <property type="gene ID" value="DDB_G0282523"/>
</dbReference>
<dbReference type="GeneID" id="8623633"/>
<dbReference type="KEGG" id="ddi:DDB_G0282523"/>
<dbReference type="dictyBase" id="DDB_G0282523"/>
<dbReference type="VEuPathDB" id="AmoebaDB:DDB_G0282523"/>
<dbReference type="HOGENOM" id="CLU_2946470_0_0_1"/>
<dbReference type="InParanoid" id="Q54SD7"/>
<dbReference type="PRO" id="PR:Q54SD7"/>
<dbReference type="Proteomes" id="UP000002195">
    <property type="component" value="Chromosome 3"/>
</dbReference>
<sequence>MTISNSLKLLNIGNAIKTNEIDYNNKKFLNNNINQNINETSKWVPNILWRGQGGKNIIAF</sequence>
<feature type="chain" id="PRO_0000351232" description="Putative uncharacterized protein DDB_G0282523">
    <location>
        <begin position="1"/>
        <end position="60"/>
    </location>
</feature>
<protein>
    <recommendedName>
        <fullName>Putative uncharacterized protein DDB_G0282523</fullName>
    </recommendedName>
</protein>
<name>Y4813_DICDI</name>
<proteinExistence type="predicted"/>
<gene>
    <name type="ORF">DDB_G0282523</name>
</gene>
<organism>
    <name type="scientific">Dictyostelium discoideum</name>
    <name type="common">Social amoeba</name>
    <dbReference type="NCBI Taxonomy" id="44689"/>
    <lineage>
        <taxon>Eukaryota</taxon>
        <taxon>Amoebozoa</taxon>
        <taxon>Evosea</taxon>
        <taxon>Eumycetozoa</taxon>
        <taxon>Dictyostelia</taxon>
        <taxon>Dictyosteliales</taxon>
        <taxon>Dictyosteliaceae</taxon>
        <taxon>Dictyostelium</taxon>
    </lineage>
</organism>
<keyword id="KW-1185">Reference proteome</keyword>